<proteinExistence type="inferred from homology"/>
<organism>
    <name type="scientific">Mycobacterium bovis (strain BCG / Pasteur 1173P2)</name>
    <dbReference type="NCBI Taxonomy" id="410289"/>
    <lineage>
        <taxon>Bacteria</taxon>
        <taxon>Bacillati</taxon>
        <taxon>Actinomycetota</taxon>
        <taxon>Actinomycetes</taxon>
        <taxon>Mycobacteriales</taxon>
        <taxon>Mycobacteriaceae</taxon>
        <taxon>Mycobacterium</taxon>
        <taxon>Mycobacterium tuberculosis complex</taxon>
    </lineage>
</organism>
<accession>A1KEW5</accession>
<feature type="chain" id="PRO_0000361142" description="Putative S-adenosyl-L-methionine-dependent methyltransferase BCG_0181">
    <location>
        <begin position="1"/>
        <end position="311"/>
    </location>
</feature>
<feature type="binding site" evidence="1">
    <location>
        <position position="135"/>
    </location>
    <ligand>
        <name>S-adenosyl-L-methionine</name>
        <dbReference type="ChEBI" id="CHEBI:59789"/>
    </ligand>
</feature>
<feature type="binding site" evidence="1">
    <location>
        <begin position="164"/>
        <end position="165"/>
    </location>
    <ligand>
        <name>S-adenosyl-L-methionine</name>
        <dbReference type="ChEBI" id="CHEBI:59789"/>
    </ligand>
</feature>
<dbReference type="EC" id="2.1.1.-"/>
<dbReference type="EMBL" id="AM408590">
    <property type="protein sequence ID" value="CAL70165.1"/>
    <property type="status" value="ALT_INIT"/>
    <property type="molecule type" value="Genomic_DNA"/>
</dbReference>
<dbReference type="SMR" id="A1KEW5"/>
<dbReference type="KEGG" id="mbb:BCG_0181"/>
<dbReference type="HOGENOM" id="CLU_056160_2_1_11"/>
<dbReference type="Proteomes" id="UP000001472">
    <property type="component" value="Chromosome"/>
</dbReference>
<dbReference type="GO" id="GO:0008168">
    <property type="term" value="F:methyltransferase activity"/>
    <property type="evidence" value="ECO:0007669"/>
    <property type="project" value="UniProtKB-KW"/>
</dbReference>
<dbReference type="GO" id="GO:0032259">
    <property type="term" value="P:methylation"/>
    <property type="evidence" value="ECO:0007669"/>
    <property type="project" value="UniProtKB-KW"/>
</dbReference>
<dbReference type="Gene3D" id="3.40.50.150">
    <property type="entry name" value="Vaccinia Virus protein VP39"/>
    <property type="match status" value="1"/>
</dbReference>
<dbReference type="InterPro" id="IPR007213">
    <property type="entry name" value="Ppm1/Ppm2/Tcmp"/>
</dbReference>
<dbReference type="InterPro" id="IPR029063">
    <property type="entry name" value="SAM-dependent_MTases_sf"/>
</dbReference>
<dbReference type="InterPro" id="IPR011610">
    <property type="entry name" value="SAM_mthyl_Trfase_ML2640-like"/>
</dbReference>
<dbReference type="NCBIfam" id="TIGR00027">
    <property type="entry name" value="mthyl_TIGR00027"/>
    <property type="match status" value="1"/>
</dbReference>
<dbReference type="PANTHER" id="PTHR43619">
    <property type="entry name" value="S-ADENOSYL-L-METHIONINE-DEPENDENT METHYLTRANSFERASE YKTD-RELATED"/>
    <property type="match status" value="1"/>
</dbReference>
<dbReference type="PANTHER" id="PTHR43619:SF2">
    <property type="entry name" value="S-ADENOSYL-L-METHIONINE-DEPENDENT METHYLTRANSFERASES SUPERFAMILY PROTEIN"/>
    <property type="match status" value="1"/>
</dbReference>
<dbReference type="Pfam" id="PF04072">
    <property type="entry name" value="LCM"/>
    <property type="match status" value="1"/>
</dbReference>
<dbReference type="SUPFAM" id="SSF53335">
    <property type="entry name" value="S-adenosyl-L-methionine-dependent methyltransferases"/>
    <property type="match status" value="1"/>
</dbReference>
<evidence type="ECO:0000250" key="1"/>
<evidence type="ECO:0000305" key="2"/>
<protein>
    <recommendedName>
        <fullName>Putative S-adenosyl-L-methionine-dependent methyltransferase BCG_0181</fullName>
        <ecNumber>2.1.1.-</ecNumber>
    </recommendedName>
</protein>
<name>Y181_MYCBP</name>
<reference key="1">
    <citation type="journal article" date="2007" name="Proc. Natl. Acad. Sci. U.S.A.">
        <title>Genome plasticity of BCG and impact on vaccine efficacy.</title>
        <authorList>
            <person name="Brosch R."/>
            <person name="Gordon S.V."/>
            <person name="Garnier T."/>
            <person name="Eiglmeier K."/>
            <person name="Frigui W."/>
            <person name="Valenti P."/>
            <person name="Dos Santos S."/>
            <person name="Duthoy S."/>
            <person name="Lacroix C."/>
            <person name="Garcia-Pelayo C."/>
            <person name="Inwald J.K."/>
            <person name="Golby P."/>
            <person name="Garcia J.N."/>
            <person name="Hewinson R.G."/>
            <person name="Behr M.A."/>
            <person name="Quail M.A."/>
            <person name="Churcher C."/>
            <person name="Barrell B.G."/>
            <person name="Parkhill J."/>
            <person name="Cole S.T."/>
        </authorList>
    </citation>
    <scope>NUCLEOTIDE SEQUENCE [LARGE SCALE GENOMIC DNA]</scope>
    <source>
        <strain>BCG / Pasteur 1173P2</strain>
    </source>
</reference>
<sequence length="311" mass="33709">MSSLPSSRRTAGDTWAITESVGATALGVAAARAVETAATNPLIRDEFAKVLVSSAGTAWARLADADLAWLDGDQLGRRVHRVACDYQAVRTHFFDEYFGAAVDAGVRQVVILAAGLDARAYRLNWPAGTVVYEIDQPSVLEYKAGILQSHGAVPTARRHAVAVDLRDDWPAALIAAGFDGTQPTAWLAEGLLPYLPGDAADRLFDMVTALSAPGSQVAVEAFTMNTKGNTQRWNRMRERLGLDIDVQALTYHEPDRSDAAQWLATHGWQVHSVSNREEMARLGRAIPQDLVDETVRTTLLRGRLVTPAQPA</sequence>
<comment type="function">
    <text evidence="1">Exhibits S-adenosyl-L-methionine-dependent methyltransferase activity.</text>
</comment>
<comment type="similarity">
    <text evidence="2">Belongs to the UPF0677 family.</text>
</comment>
<comment type="sequence caution" evidence="2">
    <conflict type="erroneous initiation">
        <sequence resource="EMBL-CDS" id="CAL70165"/>
    </conflict>
</comment>
<keyword id="KW-0489">Methyltransferase</keyword>
<keyword id="KW-0949">S-adenosyl-L-methionine</keyword>
<keyword id="KW-0808">Transferase</keyword>
<gene>
    <name type="ordered locus">BCG_0181</name>
</gene>